<keyword id="KW-1185">Reference proteome</keyword>
<dbReference type="EMBL" id="AE005674">
    <property type="protein sequence ID" value="AAN41843.1"/>
    <property type="molecule type" value="Genomic_DNA"/>
</dbReference>
<dbReference type="EMBL" id="AE014073">
    <property type="protein sequence ID" value="AAP15723.1"/>
    <property type="molecule type" value="Genomic_DNA"/>
</dbReference>
<dbReference type="RefSeq" id="NP_706136.1">
    <property type="nucleotide sequence ID" value="NC_004337.2"/>
</dbReference>
<dbReference type="RefSeq" id="WP_001185290.1">
    <property type="nucleotide sequence ID" value="NZ_WPGW01000006.1"/>
</dbReference>
<dbReference type="SMR" id="P0AA98"/>
<dbReference type="STRING" id="198214.SF0181"/>
<dbReference type="PaxDb" id="198214-SF0181"/>
<dbReference type="GeneID" id="1024443"/>
<dbReference type="KEGG" id="sfl:SF0181"/>
<dbReference type="KEGG" id="sfx:S0183"/>
<dbReference type="PATRIC" id="fig|198214.7.peg.203"/>
<dbReference type="HOGENOM" id="CLU_096741_0_0_6"/>
<dbReference type="Proteomes" id="UP000001006">
    <property type="component" value="Chromosome"/>
</dbReference>
<dbReference type="Proteomes" id="UP000002673">
    <property type="component" value="Chromosome"/>
</dbReference>
<dbReference type="CDD" id="cd22368">
    <property type="entry name" value="YaeQ-like"/>
    <property type="match status" value="1"/>
</dbReference>
<dbReference type="Gene3D" id="3.10.640.10">
    <property type="entry name" value="Restriction endonuclease-like alpha-beta roll domain"/>
    <property type="match status" value="1"/>
</dbReference>
<dbReference type="InterPro" id="IPR011335">
    <property type="entry name" value="Restrct_endonuc-II-like"/>
</dbReference>
<dbReference type="InterPro" id="IPR009822">
    <property type="entry name" value="YaeQ"/>
</dbReference>
<dbReference type="InterPro" id="IPR038590">
    <property type="entry name" value="YaeQ_sf"/>
</dbReference>
<dbReference type="PANTHER" id="PTHR38784">
    <property type="entry name" value="SUCROSE PHOSPHORYLASE"/>
    <property type="match status" value="1"/>
</dbReference>
<dbReference type="PANTHER" id="PTHR38784:SF1">
    <property type="entry name" value="SUCROSE PHOSPHORYLASE"/>
    <property type="match status" value="1"/>
</dbReference>
<dbReference type="Pfam" id="PF07152">
    <property type="entry name" value="YaeQ"/>
    <property type="match status" value="1"/>
</dbReference>
<dbReference type="PIRSF" id="PIRSF011484">
    <property type="entry name" value="YaeQ"/>
    <property type="match status" value="1"/>
</dbReference>
<dbReference type="SMART" id="SM01322">
    <property type="entry name" value="YaeQ"/>
    <property type="match status" value="1"/>
</dbReference>
<dbReference type="SUPFAM" id="SSF52980">
    <property type="entry name" value="Restriction endonuclease-like"/>
    <property type="match status" value="1"/>
</dbReference>
<proteinExistence type="predicted"/>
<name>YAEQ_SHIFL</name>
<feature type="chain" id="PRO_0000168531" description="Uncharacterized protein YaeQ">
    <location>
        <begin position="1"/>
        <end position="181"/>
    </location>
</feature>
<organism>
    <name type="scientific">Shigella flexneri</name>
    <dbReference type="NCBI Taxonomy" id="623"/>
    <lineage>
        <taxon>Bacteria</taxon>
        <taxon>Pseudomonadati</taxon>
        <taxon>Pseudomonadota</taxon>
        <taxon>Gammaproteobacteria</taxon>
        <taxon>Enterobacterales</taxon>
        <taxon>Enterobacteriaceae</taxon>
        <taxon>Shigella</taxon>
    </lineage>
</organism>
<accession>P0AA98</accession>
<accession>P52100</accession>
<accession>P77620</accession>
<accession>Q9R2E2</accession>
<gene>
    <name type="primary">yaeQ</name>
    <name type="ordered locus">SF0181</name>
    <name type="ordered locus">S0183</name>
</gene>
<protein>
    <recommendedName>
        <fullName>Uncharacterized protein YaeQ</fullName>
    </recommendedName>
</protein>
<reference key="1">
    <citation type="journal article" date="2002" name="Nucleic Acids Res.">
        <title>Genome sequence of Shigella flexneri 2a: insights into pathogenicity through comparison with genomes of Escherichia coli K12 and O157.</title>
        <authorList>
            <person name="Jin Q."/>
            <person name="Yuan Z."/>
            <person name="Xu J."/>
            <person name="Wang Y."/>
            <person name="Shen Y."/>
            <person name="Lu W."/>
            <person name="Wang J."/>
            <person name="Liu H."/>
            <person name="Yang J."/>
            <person name="Yang F."/>
            <person name="Zhang X."/>
            <person name="Zhang J."/>
            <person name="Yang G."/>
            <person name="Wu H."/>
            <person name="Qu D."/>
            <person name="Dong J."/>
            <person name="Sun L."/>
            <person name="Xue Y."/>
            <person name="Zhao A."/>
            <person name="Gao Y."/>
            <person name="Zhu J."/>
            <person name="Kan B."/>
            <person name="Ding K."/>
            <person name="Chen S."/>
            <person name="Cheng H."/>
            <person name="Yao Z."/>
            <person name="He B."/>
            <person name="Chen R."/>
            <person name="Ma D."/>
            <person name="Qiang B."/>
            <person name="Wen Y."/>
            <person name="Hou Y."/>
            <person name="Yu J."/>
        </authorList>
    </citation>
    <scope>NUCLEOTIDE SEQUENCE [LARGE SCALE GENOMIC DNA]</scope>
    <source>
        <strain>301 / Serotype 2a</strain>
    </source>
</reference>
<reference key="2">
    <citation type="journal article" date="2003" name="Infect. Immun.">
        <title>Complete genome sequence and comparative genomics of Shigella flexneri serotype 2a strain 2457T.</title>
        <authorList>
            <person name="Wei J."/>
            <person name="Goldberg M.B."/>
            <person name="Burland V."/>
            <person name="Venkatesan M.M."/>
            <person name="Deng W."/>
            <person name="Fournier G."/>
            <person name="Mayhew G.F."/>
            <person name="Plunkett G. III"/>
            <person name="Rose D.J."/>
            <person name="Darling A."/>
            <person name="Mau B."/>
            <person name="Perna N.T."/>
            <person name="Payne S.M."/>
            <person name="Runyen-Janecky L.J."/>
            <person name="Zhou S."/>
            <person name="Schwartz D.C."/>
            <person name="Blattner F.R."/>
        </authorList>
    </citation>
    <scope>NUCLEOTIDE SEQUENCE [LARGE SCALE GENOMIC DNA]</scope>
    <source>
        <strain>ATCC 700930 / 2457T / Serotype 2a</strain>
    </source>
</reference>
<sequence>MALKATIYKATVNVADLDRNQFLDASLTLARHPSETQERMMLRLLAWLKYADERLQFTRGLCADDEPEAWLRNDHLGIDLWIELGLPDERRIKKACTQAAEVALFTYNSRAAQIWWQQNQSKCVQFANLSVWYLDDEQLAKVSAFADRTMTLQATIQDGVIWLSDDKNNLEVNLTAWQQPS</sequence>